<name>YIDE_SALPK</name>
<protein>
    <recommendedName>
        <fullName evidence="1">Putative transport protein YidE</fullName>
    </recommendedName>
</protein>
<keyword id="KW-1003">Cell membrane</keyword>
<keyword id="KW-0472">Membrane</keyword>
<keyword id="KW-0677">Repeat</keyword>
<keyword id="KW-0812">Transmembrane</keyword>
<keyword id="KW-1133">Transmembrane helix</keyword>
<keyword id="KW-0813">Transport</keyword>
<organism>
    <name type="scientific">Salmonella paratyphi A (strain AKU_12601)</name>
    <dbReference type="NCBI Taxonomy" id="554290"/>
    <lineage>
        <taxon>Bacteria</taxon>
        <taxon>Pseudomonadati</taxon>
        <taxon>Pseudomonadota</taxon>
        <taxon>Gammaproteobacteria</taxon>
        <taxon>Enterobacterales</taxon>
        <taxon>Enterobacteriaceae</taxon>
        <taxon>Salmonella</taxon>
    </lineage>
</organism>
<accession>B5BIJ0</accession>
<dbReference type="EMBL" id="FM200053">
    <property type="protein sequence ID" value="CAR61687.1"/>
    <property type="molecule type" value="Genomic_DNA"/>
</dbReference>
<dbReference type="RefSeq" id="WP_001279793.1">
    <property type="nucleotide sequence ID" value="NC_011147.1"/>
</dbReference>
<dbReference type="SMR" id="B5BIJ0"/>
<dbReference type="KEGG" id="sek:SSPA3415"/>
<dbReference type="HOGENOM" id="CLU_035023_3_1_6"/>
<dbReference type="Proteomes" id="UP000001869">
    <property type="component" value="Chromosome"/>
</dbReference>
<dbReference type="GO" id="GO:0005886">
    <property type="term" value="C:plasma membrane"/>
    <property type="evidence" value="ECO:0007669"/>
    <property type="project" value="UniProtKB-SubCell"/>
</dbReference>
<dbReference type="GO" id="GO:0008324">
    <property type="term" value="F:monoatomic cation transmembrane transporter activity"/>
    <property type="evidence" value="ECO:0007669"/>
    <property type="project" value="InterPro"/>
</dbReference>
<dbReference type="GO" id="GO:0006813">
    <property type="term" value="P:potassium ion transport"/>
    <property type="evidence" value="ECO:0007669"/>
    <property type="project" value="InterPro"/>
</dbReference>
<dbReference type="FunFam" id="3.30.70.1450:FF:000004">
    <property type="entry name" value="Putative transport protein YidE"/>
    <property type="match status" value="1"/>
</dbReference>
<dbReference type="Gene3D" id="3.30.70.1450">
    <property type="entry name" value="Regulator of K+ conductance, C-terminal domain"/>
    <property type="match status" value="2"/>
</dbReference>
<dbReference type="HAMAP" id="MF_01016">
    <property type="entry name" value="YidE"/>
    <property type="match status" value="1"/>
</dbReference>
<dbReference type="InterPro" id="IPR050144">
    <property type="entry name" value="AAE_transporter"/>
</dbReference>
<dbReference type="InterPro" id="IPR006037">
    <property type="entry name" value="RCK_C"/>
</dbReference>
<dbReference type="InterPro" id="IPR036721">
    <property type="entry name" value="RCK_C_sf"/>
</dbReference>
<dbReference type="InterPro" id="IPR023018">
    <property type="entry name" value="Transpt_YidE_put"/>
</dbReference>
<dbReference type="InterPro" id="IPR006512">
    <property type="entry name" value="YidE_YbjL"/>
</dbReference>
<dbReference type="NCBIfam" id="NF003007">
    <property type="entry name" value="PRK03818.1"/>
    <property type="match status" value="1"/>
</dbReference>
<dbReference type="NCBIfam" id="TIGR01625">
    <property type="entry name" value="YidE_YbjL_dupl"/>
    <property type="match status" value="2"/>
</dbReference>
<dbReference type="PANTHER" id="PTHR30445">
    <property type="entry name" value="K(+)_H(+) ANTIPORTER SUBUNIT KHTT"/>
    <property type="match status" value="1"/>
</dbReference>
<dbReference type="PANTHER" id="PTHR30445:SF3">
    <property type="entry name" value="TRANSPORT PROTEIN YIDE-RELATED"/>
    <property type="match status" value="1"/>
</dbReference>
<dbReference type="Pfam" id="PF06826">
    <property type="entry name" value="Asp-Al_Ex"/>
    <property type="match status" value="2"/>
</dbReference>
<dbReference type="Pfam" id="PF02080">
    <property type="entry name" value="TrkA_C"/>
    <property type="match status" value="2"/>
</dbReference>
<dbReference type="SUPFAM" id="SSF116726">
    <property type="entry name" value="TrkA C-terminal domain-like"/>
    <property type="match status" value="2"/>
</dbReference>
<dbReference type="PROSITE" id="PS51202">
    <property type="entry name" value="RCK_C"/>
    <property type="match status" value="2"/>
</dbReference>
<gene>
    <name evidence="1" type="primary">yidE</name>
    <name type="ordered locus">SSPA3415</name>
</gene>
<evidence type="ECO:0000255" key="1">
    <source>
        <dbReference type="HAMAP-Rule" id="MF_01016"/>
    </source>
</evidence>
<sequence>MSDIALTVSVLALVAVVGLWIGNIKVRGVGFGIGGVLFGGIIVGHFVDQAGVTLSGDMLHFIQEFGLILFVYTIGIQVGPGFFASLRVSGLRLNLFAVLIVIMGGLVTAILHKIFAIPLPVVLGIFSGAVTNTPALGAGQQILRDLGTPVDLVDQMGMSYAMAYPFGICGILLTMWLMRLIFRVNVEAEAQKHESSLANGHSLIQTMNIRVENPNLNNMAIQDVPILNSDKIICSRLKRDDTLMVPSPGTIIQAGDLLHLVGQSTDLHNAQLVIGKEVDTSLSTRGTDLRVERVVVTNEKVLGKRIRDLHFKERYDVVISRLNRAGVELVASSDASLQFGDILNLVGRPASIDAVANVVGNAQQKLQQVQMLPVFIGIGLGVLLGSIPLFVPGFPVALKLGLAGGPLIMALILGRIGSIGKLYWFMPPSANLALRELGIVLFLAVVGLKSGGDFVDTLTQGEGLSWIGYGIFITAIPLITVGLLARIFAKMNYLTLCGMLAGSMTDPPALAFANNLHATSGAAALSYATVYPLVMFLRIITPQLLAVIFWGMG</sequence>
<proteinExistence type="inferred from homology"/>
<comment type="subcellular location">
    <subcellularLocation>
        <location evidence="1">Cell membrane</location>
        <topology evidence="1">Multi-pass membrane protein</topology>
    </subcellularLocation>
</comment>
<comment type="similarity">
    <text evidence="1">Belongs to the AAE transporter (TC 2.A.81) family. YidE subfamily.</text>
</comment>
<feature type="chain" id="PRO_1000135218" description="Putative transport protein YidE">
    <location>
        <begin position="1"/>
        <end position="553"/>
    </location>
</feature>
<feature type="transmembrane region" description="Helical" evidence="1">
    <location>
        <begin position="4"/>
        <end position="24"/>
    </location>
</feature>
<feature type="transmembrane region" description="Helical" evidence="1">
    <location>
        <begin position="28"/>
        <end position="48"/>
    </location>
</feature>
<feature type="transmembrane region" description="Helical" evidence="1">
    <location>
        <begin position="65"/>
        <end position="85"/>
    </location>
</feature>
<feature type="transmembrane region" description="Helical" evidence="1">
    <location>
        <begin position="95"/>
        <end position="115"/>
    </location>
</feature>
<feature type="transmembrane region" description="Helical" evidence="1">
    <location>
        <begin position="158"/>
        <end position="178"/>
    </location>
</feature>
<feature type="transmembrane region" description="Helical" evidence="1">
    <location>
        <begin position="371"/>
        <end position="391"/>
    </location>
</feature>
<feature type="transmembrane region" description="Helical" evidence="1">
    <location>
        <begin position="393"/>
        <end position="413"/>
    </location>
</feature>
<feature type="transmembrane region" description="Helical" evidence="1">
    <location>
        <begin position="437"/>
        <end position="457"/>
    </location>
</feature>
<feature type="transmembrane region" description="Helical" evidence="1">
    <location>
        <begin position="464"/>
        <end position="484"/>
    </location>
</feature>
<feature type="transmembrane region" description="Helical" evidence="1">
    <location>
        <begin position="493"/>
        <end position="513"/>
    </location>
</feature>
<feature type="transmembrane region" description="Helical" evidence="1">
    <location>
        <begin position="533"/>
        <end position="553"/>
    </location>
</feature>
<feature type="domain" description="RCK C-terminal 1" evidence="1">
    <location>
        <begin position="192"/>
        <end position="276"/>
    </location>
</feature>
<feature type="domain" description="RCK C-terminal 2" evidence="1">
    <location>
        <begin position="279"/>
        <end position="361"/>
    </location>
</feature>
<reference key="1">
    <citation type="journal article" date="2009" name="BMC Genomics">
        <title>Pseudogene accumulation in the evolutionary histories of Salmonella enterica serovars Paratyphi A and Typhi.</title>
        <authorList>
            <person name="Holt K.E."/>
            <person name="Thomson N.R."/>
            <person name="Wain J."/>
            <person name="Langridge G.C."/>
            <person name="Hasan R."/>
            <person name="Bhutta Z.A."/>
            <person name="Quail M.A."/>
            <person name="Norbertczak H."/>
            <person name="Walker D."/>
            <person name="Simmonds M."/>
            <person name="White B."/>
            <person name="Bason N."/>
            <person name="Mungall K."/>
            <person name="Dougan G."/>
            <person name="Parkhill J."/>
        </authorList>
    </citation>
    <scope>NUCLEOTIDE SEQUENCE [LARGE SCALE GENOMIC DNA]</scope>
    <source>
        <strain>AKU_12601</strain>
    </source>
</reference>